<name>TRUA_BORT9</name>
<gene>
    <name evidence="1" type="primary">truA</name>
    <name type="ordered locus">BT0012</name>
</gene>
<organism>
    <name type="scientific">Borrelia turicatae (strain 91E135)</name>
    <dbReference type="NCBI Taxonomy" id="314724"/>
    <lineage>
        <taxon>Bacteria</taxon>
        <taxon>Pseudomonadati</taxon>
        <taxon>Spirochaetota</taxon>
        <taxon>Spirochaetia</taxon>
        <taxon>Spirochaetales</taxon>
        <taxon>Borreliaceae</taxon>
        <taxon>Borrelia</taxon>
    </lineage>
</organism>
<comment type="function">
    <text evidence="1">Formation of pseudouridine at positions 38, 39 and 40 in the anticodon stem and loop of transfer RNAs.</text>
</comment>
<comment type="catalytic activity">
    <reaction evidence="1">
        <text>uridine(38/39/40) in tRNA = pseudouridine(38/39/40) in tRNA</text>
        <dbReference type="Rhea" id="RHEA:22376"/>
        <dbReference type="Rhea" id="RHEA-COMP:10085"/>
        <dbReference type="Rhea" id="RHEA-COMP:10087"/>
        <dbReference type="ChEBI" id="CHEBI:65314"/>
        <dbReference type="ChEBI" id="CHEBI:65315"/>
        <dbReference type="EC" id="5.4.99.12"/>
    </reaction>
</comment>
<comment type="subunit">
    <text evidence="1">Homodimer.</text>
</comment>
<comment type="similarity">
    <text evidence="1">Belongs to the tRNA pseudouridine synthase TruA family.</text>
</comment>
<accession>A1QYG5</accession>
<proteinExistence type="inferred from homology"/>
<feature type="chain" id="PRO_1000194531" description="tRNA pseudouridine synthase A">
    <location>
        <begin position="1"/>
        <end position="245"/>
    </location>
</feature>
<feature type="active site" description="Nucleophile" evidence="1">
    <location>
        <position position="52"/>
    </location>
</feature>
<feature type="binding site" evidence="1">
    <location>
        <position position="110"/>
    </location>
    <ligand>
        <name>substrate</name>
    </ligand>
</feature>
<protein>
    <recommendedName>
        <fullName evidence="1">tRNA pseudouridine synthase A</fullName>
        <ecNumber evidence="1">5.4.99.12</ecNumber>
    </recommendedName>
    <alternativeName>
        <fullName evidence="1">tRNA pseudouridine(38-40) synthase</fullName>
    </alternativeName>
    <alternativeName>
        <fullName evidence="1">tRNA pseudouridylate synthase I</fullName>
    </alternativeName>
    <alternativeName>
        <fullName evidence="1">tRNA-uridine isomerase I</fullName>
    </alternativeName>
</protein>
<keyword id="KW-0413">Isomerase</keyword>
<keyword id="KW-1185">Reference proteome</keyword>
<keyword id="KW-0819">tRNA processing</keyword>
<dbReference type="EC" id="5.4.99.12" evidence="1"/>
<dbReference type="EMBL" id="CP000049">
    <property type="protein sequence ID" value="AAX17357.1"/>
    <property type="molecule type" value="Genomic_DNA"/>
</dbReference>
<dbReference type="RefSeq" id="WP_011771976.1">
    <property type="nucleotide sequence ID" value="NC_008710.1"/>
</dbReference>
<dbReference type="SMR" id="A1QYG5"/>
<dbReference type="KEGG" id="btu:BT0012"/>
<dbReference type="eggNOG" id="COG0101">
    <property type="taxonomic scope" value="Bacteria"/>
</dbReference>
<dbReference type="HOGENOM" id="CLU_014673_0_1_12"/>
<dbReference type="Proteomes" id="UP000001205">
    <property type="component" value="Chromosome"/>
</dbReference>
<dbReference type="GO" id="GO:0003723">
    <property type="term" value="F:RNA binding"/>
    <property type="evidence" value="ECO:0007669"/>
    <property type="project" value="InterPro"/>
</dbReference>
<dbReference type="GO" id="GO:0160147">
    <property type="term" value="F:tRNA pseudouridine(38-40) synthase activity"/>
    <property type="evidence" value="ECO:0007669"/>
    <property type="project" value="UniProtKB-EC"/>
</dbReference>
<dbReference type="GO" id="GO:0031119">
    <property type="term" value="P:tRNA pseudouridine synthesis"/>
    <property type="evidence" value="ECO:0007669"/>
    <property type="project" value="UniProtKB-UniRule"/>
</dbReference>
<dbReference type="CDD" id="cd02570">
    <property type="entry name" value="PseudoU_synth_EcTruA"/>
    <property type="match status" value="1"/>
</dbReference>
<dbReference type="FunFam" id="3.30.70.580:FF:000001">
    <property type="entry name" value="tRNA pseudouridine synthase A"/>
    <property type="match status" value="1"/>
</dbReference>
<dbReference type="Gene3D" id="3.30.70.660">
    <property type="entry name" value="Pseudouridine synthase I, catalytic domain, C-terminal subdomain"/>
    <property type="match status" value="1"/>
</dbReference>
<dbReference type="Gene3D" id="3.30.70.580">
    <property type="entry name" value="Pseudouridine synthase I, catalytic domain, N-terminal subdomain"/>
    <property type="match status" value="1"/>
</dbReference>
<dbReference type="HAMAP" id="MF_00171">
    <property type="entry name" value="TruA"/>
    <property type="match status" value="1"/>
</dbReference>
<dbReference type="InterPro" id="IPR020103">
    <property type="entry name" value="PsdUridine_synth_cat_dom_sf"/>
</dbReference>
<dbReference type="InterPro" id="IPR001406">
    <property type="entry name" value="PsdUridine_synth_TruA"/>
</dbReference>
<dbReference type="InterPro" id="IPR020097">
    <property type="entry name" value="PsdUridine_synth_TruA_a/b_dom"/>
</dbReference>
<dbReference type="InterPro" id="IPR020095">
    <property type="entry name" value="PsdUridine_synth_TruA_C"/>
</dbReference>
<dbReference type="InterPro" id="IPR020094">
    <property type="entry name" value="TruA/RsuA/RluB/E/F_N"/>
</dbReference>
<dbReference type="NCBIfam" id="TIGR00071">
    <property type="entry name" value="hisT_truA"/>
    <property type="match status" value="1"/>
</dbReference>
<dbReference type="PANTHER" id="PTHR11142">
    <property type="entry name" value="PSEUDOURIDYLATE SYNTHASE"/>
    <property type="match status" value="1"/>
</dbReference>
<dbReference type="PANTHER" id="PTHR11142:SF0">
    <property type="entry name" value="TRNA PSEUDOURIDINE SYNTHASE-LIKE 1"/>
    <property type="match status" value="1"/>
</dbReference>
<dbReference type="Pfam" id="PF01416">
    <property type="entry name" value="PseudoU_synth_1"/>
    <property type="match status" value="2"/>
</dbReference>
<dbReference type="PIRSF" id="PIRSF001430">
    <property type="entry name" value="tRNA_psdUrid_synth"/>
    <property type="match status" value="1"/>
</dbReference>
<dbReference type="SUPFAM" id="SSF55120">
    <property type="entry name" value="Pseudouridine synthase"/>
    <property type="match status" value="1"/>
</dbReference>
<reference key="1">
    <citation type="submission" date="2004-12" db="EMBL/GenBank/DDBJ databases">
        <title>The genome sequence of Borrelia hermsii and Borrelia turicatae: comparative analysis of two agents of endemic N. America relapsing fever.</title>
        <authorList>
            <person name="Porcella S.F."/>
            <person name="Raffel S.J."/>
            <person name="Schrumpf M.E."/>
            <person name="Montgomery B."/>
            <person name="Smith T."/>
            <person name="Schwan T.G."/>
        </authorList>
    </citation>
    <scope>NUCLEOTIDE SEQUENCE [LARGE SCALE GENOMIC DNA]</scope>
    <source>
        <strain>91E135</strain>
    </source>
</reference>
<evidence type="ECO:0000255" key="1">
    <source>
        <dbReference type="HAMAP-Rule" id="MF_00171"/>
    </source>
</evidence>
<sequence>MKKVLAKITYDGSLYYGFQIQPKKPTIQGEIEKVLEKISKTKIKIHSAGRTDKGVHARGQIISFYIKINIKLKNLKTAINSLLKDDIRIIKLKYVEDKFQPRFDAKRRKYSYYILNNENHYPWEGYRAYYVKKKLNINRLNEMAEMLIGIHDFTTFSCIRDQTNSKLKEIYYARFKKKNKFIIFEIIGSSFLWKMVRSIVGVMIDIEIKNEPVDTFKKILNSKNRKLTRKTAPAKALFLDKVFYE</sequence>